<protein>
    <recommendedName>
        <fullName evidence="1">Phosphoribosyl-ATP pyrophosphatase</fullName>
        <shortName evidence="1">PRA-PH</shortName>
        <ecNumber evidence="1">3.6.1.31</ecNumber>
    </recommendedName>
</protein>
<gene>
    <name evidence="1" type="primary">hisE</name>
    <name type="ordered locus">SAV_6906</name>
</gene>
<comment type="catalytic activity">
    <reaction evidence="1">
        <text>1-(5-phospho-beta-D-ribosyl)-ATP + H2O = 1-(5-phospho-beta-D-ribosyl)-5'-AMP + diphosphate + H(+)</text>
        <dbReference type="Rhea" id="RHEA:22828"/>
        <dbReference type="ChEBI" id="CHEBI:15377"/>
        <dbReference type="ChEBI" id="CHEBI:15378"/>
        <dbReference type="ChEBI" id="CHEBI:33019"/>
        <dbReference type="ChEBI" id="CHEBI:59457"/>
        <dbReference type="ChEBI" id="CHEBI:73183"/>
        <dbReference type="EC" id="3.6.1.31"/>
    </reaction>
</comment>
<comment type="pathway">
    <text evidence="1">Amino-acid biosynthesis; L-histidine biosynthesis; L-histidine from 5-phospho-alpha-D-ribose 1-diphosphate: step 2/9.</text>
</comment>
<comment type="subcellular location">
    <subcellularLocation>
        <location evidence="1">Cytoplasm</location>
    </subcellularLocation>
</comment>
<comment type="similarity">
    <text evidence="1">Belongs to the PRA-PH family.</text>
</comment>
<accession>Q827L8</accession>
<sequence>MSKKTFEELFTELQHKAANGDPSTSRTAELVGKGVHAIGKKVVEEAAEVWMAAEYEGKDAAAEEISQLLYHVQVMMVARGISLDDVYAHL</sequence>
<name>HIS2_STRAW</name>
<reference key="1">
    <citation type="journal article" date="2001" name="Proc. Natl. Acad. Sci. U.S.A.">
        <title>Genome sequence of an industrial microorganism Streptomyces avermitilis: deducing the ability of producing secondary metabolites.</title>
        <authorList>
            <person name="Omura S."/>
            <person name="Ikeda H."/>
            <person name="Ishikawa J."/>
            <person name="Hanamoto A."/>
            <person name="Takahashi C."/>
            <person name="Shinose M."/>
            <person name="Takahashi Y."/>
            <person name="Horikawa H."/>
            <person name="Nakazawa H."/>
            <person name="Osonoe T."/>
            <person name="Kikuchi H."/>
            <person name="Shiba T."/>
            <person name="Sakaki Y."/>
            <person name="Hattori M."/>
        </authorList>
    </citation>
    <scope>NUCLEOTIDE SEQUENCE [LARGE SCALE GENOMIC DNA]</scope>
    <source>
        <strain>ATCC 31267 / DSM 46492 / JCM 5070 / NBRC 14893 / NCIMB 12804 / NRRL 8165 / MA-4680</strain>
    </source>
</reference>
<reference key="2">
    <citation type="journal article" date="2003" name="Nat. Biotechnol.">
        <title>Complete genome sequence and comparative analysis of the industrial microorganism Streptomyces avermitilis.</title>
        <authorList>
            <person name="Ikeda H."/>
            <person name="Ishikawa J."/>
            <person name="Hanamoto A."/>
            <person name="Shinose M."/>
            <person name="Kikuchi H."/>
            <person name="Shiba T."/>
            <person name="Sakaki Y."/>
            <person name="Hattori M."/>
            <person name="Omura S."/>
        </authorList>
    </citation>
    <scope>NUCLEOTIDE SEQUENCE [LARGE SCALE GENOMIC DNA]</scope>
    <source>
        <strain>ATCC 31267 / DSM 46492 / JCM 5070 / NBRC 14893 / NCIMB 12804 / NRRL 8165 / MA-4680</strain>
    </source>
</reference>
<feature type="chain" id="PRO_0000136387" description="Phosphoribosyl-ATP pyrophosphatase">
    <location>
        <begin position="1"/>
        <end position="90"/>
    </location>
</feature>
<proteinExistence type="inferred from homology"/>
<keyword id="KW-0028">Amino-acid biosynthesis</keyword>
<keyword id="KW-0067">ATP-binding</keyword>
<keyword id="KW-0963">Cytoplasm</keyword>
<keyword id="KW-0368">Histidine biosynthesis</keyword>
<keyword id="KW-0378">Hydrolase</keyword>
<keyword id="KW-0547">Nucleotide-binding</keyword>
<keyword id="KW-1185">Reference proteome</keyword>
<organism>
    <name type="scientific">Streptomyces avermitilis (strain ATCC 31267 / DSM 46492 / JCM 5070 / NBRC 14893 / NCIMB 12804 / NRRL 8165 / MA-4680)</name>
    <dbReference type="NCBI Taxonomy" id="227882"/>
    <lineage>
        <taxon>Bacteria</taxon>
        <taxon>Bacillati</taxon>
        <taxon>Actinomycetota</taxon>
        <taxon>Actinomycetes</taxon>
        <taxon>Kitasatosporales</taxon>
        <taxon>Streptomycetaceae</taxon>
        <taxon>Streptomyces</taxon>
    </lineage>
</organism>
<evidence type="ECO:0000255" key="1">
    <source>
        <dbReference type="HAMAP-Rule" id="MF_01020"/>
    </source>
</evidence>
<dbReference type="EC" id="3.6.1.31" evidence="1"/>
<dbReference type="EMBL" id="BA000030">
    <property type="protein sequence ID" value="BAC74617.1"/>
    <property type="molecule type" value="Genomic_DNA"/>
</dbReference>
<dbReference type="RefSeq" id="WP_010988304.1">
    <property type="nucleotide sequence ID" value="NZ_JZJK01000082.1"/>
</dbReference>
<dbReference type="SMR" id="Q827L8"/>
<dbReference type="GeneID" id="41543980"/>
<dbReference type="KEGG" id="sma:SAVERM_6906"/>
<dbReference type="eggNOG" id="COG0140">
    <property type="taxonomic scope" value="Bacteria"/>
</dbReference>
<dbReference type="HOGENOM" id="CLU_123337_2_1_11"/>
<dbReference type="OrthoDB" id="3212875at2"/>
<dbReference type="UniPathway" id="UPA00031">
    <property type="reaction ID" value="UER00007"/>
</dbReference>
<dbReference type="Proteomes" id="UP000000428">
    <property type="component" value="Chromosome"/>
</dbReference>
<dbReference type="GO" id="GO:0005737">
    <property type="term" value="C:cytoplasm"/>
    <property type="evidence" value="ECO:0007669"/>
    <property type="project" value="UniProtKB-SubCell"/>
</dbReference>
<dbReference type="GO" id="GO:0005524">
    <property type="term" value="F:ATP binding"/>
    <property type="evidence" value="ECO:0007669"/>
    <property type="project" value="UniProtKB-KW"/>
</dbReference>
<dbReference type="GO" id="GO:0004636">
    <property type="term" value="F:phosphoribosyl-ATP diphosphatase activity"/>
    <property type="evidence" value="ECO:0007669"/>
    <property type="project" value="UniProtKB-UniRule"/>
</dbReference>
<dbReference type="GO" id="GO:0000105">
    <property type="term" value="P:L-histidine biosynthetic process"/>
    <property type="evidence" value="ECO:0007669"/>
    <property type="project" value="UniProtKB-UniRule"/>
</dbReference>
<dbReference type="CDD" id="cd11547">
    <property type="entry name" value="NTP-PPase_HisE"/>
    <property type="match status" value="1"/>
</dbReference>
<dbReference type="Gene3D" id="1.10.287.1080">
    <property type="entry name" value="MazG-like"/>
    <property type="match status" value="1"/>
</dbReference>
<dbReference type="HAMAP" id="MF_01020">
    <property type="entry name" value="HisE"/>
    <property type="match status" value="1"/>
</dbReference>
<dbReference type="InterPro" id="IPR008179">
    <property type="entry name" value="HisE"/>
</dbReference>
<dbReference type="InterPro" id="IPR021130">
    <property type="entry name" value="PRib-ATP_PPHydrolase-like"/>
</dbReference>
<dbReference type="NCBIfam" id="TIGR03188">
    <property type="entry name" value="histidine_hisI"/>
    <property type="match status" value="1"/>
</dbReference>
<dbReference type="NCBIfam" id="NF001610">
    <property type="entry name" value="PRK00400.1-1"/>
    <property type="match status" value="1"/>
</dbReference>
<dbReference type="PANTHER" id="PTHR42945">
    <property type="entry name" value="HISTIDINE BIOSYNTHESIS BIFUNCTIONAL PROTEIN"/>
    <property type="match status" value="1"/>
</dbReference>
<dbReference type="PANTHER" id="PTHR42945:SF1">
    <property type="entry name" value="HISTIDINE BIOSYNTHESIS BIFUNCTIONAL PROTEIN HIS7"/>
    <property type="match status" value="1"/>
</dbReference>
<dbReference type="Pfam" id="PF01503">
    <property type="entry name" value="PRA-PH"/>
    <property type="match status" value="1"/>
</dbReference>
<dbReference type="SUPFAM" id="SSF101386">
    <property type="entry name" value="all-alpha NTP pyrophosphatases"/>
    <property type="match status" value="1"/>
</dbReference>